<gene>
    <name evidence="1" type="primary">atpA1</name>
    <name type="ordered locus">Mhun_1183</name>
</gene>
<comment type="function">
    <text evidence="1">Component of the A-type ATP synthase that produces ATP from ADP in the presence of a proton gradient across the membrane. The A chain is the catalytic subunit.</text>
</comment>
<comment type="catalytic activity">
    <reaction evidence="1">
        <text>ATP + H2O + 4 H(+)(in) = ADP + phosphate + 5 H(+)(out)</text>
        <dbReference type="Rhea" id="RHEA:57720"/>
        <dbReference type="ChEBI" id="CHEBI:15377"/>
        <dbReference type="ChEBI" id="CHEBI:15378"/>
        <dbReference type="ChEBI" id="CHEBI:30616"/>
        <dbReference type="ChEBI" id="CHEBI:43474"/>
        <dbReference type="ChEBI" id="CHEBI:456216"/>
        <dbReference type="EC" id="7.1.2.2"/>
    </reaction>
</comment>
<comment type="subunit">
    <text evidence="1">Has multiple subunits with at least A(3), B(3), C, D, E, F, H, I and proteolipid K(x).</text>
</comment>
<comment type="subcellular location">
    <subcellularLocation>
        <location evidence="1">Cell membrane</location>
        <topology evidence="1">Peripheral membrane protein</topology>
    </subcellularLocation>
</comment>
<comment type="similarity">
    <text evidence="1">Belongs to the ATPase alpha/beta chains family.</text>
</comment>
<organism>
    <name type="scientific">Methanospirillum hungatei JF-1 (strain ATCC 27890 / DSM 864 / NBRC 100397 / JF-1)</name>
    <dbReference type="NCBI Taxonomy" id="323259"/>
    <lineage>
        <taxon>Archaea</taxon>
        <taxon>Methanobacteriati</taxon>
        <taxon>Methanobacteriota</taxon>
        <taxon>Stenosarchaea group</taxon>
        <taxon>Methanomicrobia</taxon>
        <taxon>Methanomicrobiales</taxon>
        <taxon>Methanospirillaceae</taxon>
        <taxon>Methanospirillum</taxon>
    </lineage>
</organism>
<name>AATA1_METHJ</name>
<accession>Q2FP52</accession>
<proteinExistence type="inferred from homology"/>
<dbReference type="EC" id="7.1.2.2" evidence="1"/>
<dbReference type="EMBL" id="CP000254">
    <property type="protein sequence ID" value="ABD40931.1"/>
    <property type="molecule type" value="Genomic_DNA"/>
</dbReference>
<dbReference type="RefSeq" id="WP_011448208.1">
    <property type="nucleotide sequence ID" value="NC_007796.1"/>
</dbReference>
<dbReference type="SMR" id="Q2FP52"/>
<dbReference type="FunCoup" id="Q2FP52">
    <property type="interactions" value="91"/>
</dbReference>
<dbReference type="STRING" id="323259.Mhun_1183"/>
<dbReference type="EnsemblBacteria" id="ABD40931">
    <property type="protein sequence ID" value="ABD40931"/>
    <property type="gene ID" value="Mhun_1183"/>
</dbReference>
<dbReference type="GeneID" id="3923385"/>
<dbReference type="KEGG" id="mhu:Mhun_1183"/>
<dbReference type="eggNOG" id="arCOG00868">
    <property type="taxonomic scope" value="Archaea"/>
</dbReference>
<dbReference type="HOGENOM" id="CLU_008162_3_1_2"/>
<dbReference type="InParanoid" id="Q2FP52"/>
<dbReference type="OrthoDB" id="115235at2157"/>
<dbReference type="Proteomes" id="UP000001941">
    <property type="component" value="Chromosome"/>
</dbReference>
<dbReference type="GO" id="GO:0005886">
    <property type="term" value="C:plasma membrane"/>
    <property type="evidence" value="ECO:0007669"/>
    <property type="project" value="UniProtKB-SubCell"/>
</dbReference>
<dbReference type="GO" id="GO:0033178">
    <property type="term" value="C:proton-transporting two-sector ATPase complex, catalytic domain"/>
    <property type="evidence" value="ECO:0007669"/>
    <property type="project" value="InterPro"/>
</dbReference>
<dbReference type="GO" id="GO:0005524">
    <property type="term" value="F:ATP binding"/>
    <property type="evidence" value="ECO:0007669"/>
    <property type="project" value="UniProtKB-UniRule"/>
</dbReference>
<dbReference type="GO" id="GO:0016887">
    <property type="term" value="F:ATP hydrolysis activity"/>
    <property type="evidence" value="ECO:0007669"/>
    <property type="project" value="InterPro"/>
</dbReference>
<dbReference type="GO" id="GO:0046933">
    <property type="term" value="F:proton-transporting ATP synthase activity, rotational mechanism"/>
    <property type="evidence" value="ECO:0007669"/>
    <property type="project" value="UniProtKB-UniRule"/>
</dbReference>
<dbReference type="GO" id="GO:0046961">
    <property type="term" value="F:proton-transporting ATPase activity, rotational mechanism"/>
    <property type="evidence" value="ECO:0007669"/>
    <property type="project" value="InterPro"/>
</dbReference>
<dbReference type="GO" id="GO:0042777">
    <property type="term" value="P:proton motive force-driven plasma membrane ATP synthesis"/>
    <property type="evidence" value="ECO:0007669"/>
    <property type="project" value="UniProtKB-UniRule"/>
</dbReference>
<dbReference type="CDD" id="cd18111">
    <property type="entry name" value="ATP-synt_V_A-type_alpha_C"/>
    <property type="match status" value="1"/>
</dbReference>
<dbReference type="CDD" id="cd01134">
    <property type="entry name" value="V_A-ATPase_A"/>
    <property type="match status" value="1"/>
</dbReference>
<dbReference type="FunFam" id="3.40.50.300:FF:000675">
    <property type="entry name" value="V-type ATP synthase alpha chain"/>
    <property type="match status" value="1"/>
</dbReference>
<dbReference type="FunFam" id="1.10.1140.10:FF:000002">
    <property type="entry name" value="V-type proton ATPase catalytic subunit A"/>
    <property type="match status" value="1"/>
</dbReference>
<dbReference type="Gene3D" id="2.40.30.20">
    <property type="match status" value="1"/>
</dbReference>
<dbReference type="Gene3D" id="2.40.50.100">
    <property type="match status" value="1"/>
</dbReference>
<dbReference type="Gene3D" id="1.10.1140.10">
    <property type="entry name" value="Bovine Mitochondrial F1-atpase, Atp Synthase Beta Chain, Chain D, domain 3"/>
    <property type="match status" value="1"/>
</dbReference>
<dbReference type="Gene3D" id="3.40.50.300">
    <property type="entry name" value="P-loop containing nucleotide triphosphate hydrolases"/>
    <property type="match status" value="1"/>
</dbReference>
<dbReference type="HAMAP" id="MF_00309">
    <property type="entry name" value="ATP_synth_A_arch"/>
    <property type="match status" value="1"/>
</dbReference>
<dbReference type="InterPro" id="IPR003593">
    <property type="entry name" value="AAA+_ATPase"/>
</dbReference>
<dbReference type="InterPro" id="IPR055190">
    <property type="entry name" value="ATP-synt_VA_C"/>
</dbReference>
<dbReference type="InterPro" id="IPR031686">
    <property type="entry name" value="ATP-synth_a_Xtn"/>
</dbReference>
<dbReference type="InterPro" id="IPR023366">
    <property type="entry name" value="ATP_synth_asu-like_sf"/>
</dbReference>
<dbReference type="InterPro" id="IPR005726">
    <property type="entry name" value="ATP_synth_asu_arc"/>
</dbReference>
<dbReference type="InterPro" id="IPR020003">
    <property type="entry name" value="ATPase_a/bsu_AS"/>
</dbReference>
<dbReference type="InterPro" id="IPR004100">
    <property type="entry name" value="ATPase_F1/V1/A1_a/bsu_N"/>
</dbReference>
<dbReference type="InterPro" id="IPR036121">
    <property type="entry name" value="ATPase_F1/V1/A1_a/bsu_N_sf"/>
</dbReference>
<dbReference type="InterPro" id="IPR000194">
    <property type="entry name" value="ATPase_F1/V1/A1_a/bsu_nucl-bd"/>
</dbReference>
<dbReference type="InterPro" id="IPR024034">
    <property type="entry name" value="ATPase_F1/V1_b/a_C"/>
</dbReference>
<dbReference type="InterPro" id="IPR027417">
    <property type="entry name" value="P-loop_NTPase"/>
</dbReference>
<dbReference type="InterPro" id="IPR001763">
    <property type="entry name" value="Rhodanese-like_dom"/>
</dbReference>
<dbReference type="InterPro" id="IPR022878">
    <property type="entry name" value="V-ATPase_asu"/>
</dbReference>
<dbReference type="NCBIfam" id="TIGR01043">
    <property type="entry name" value="ATP_syn_A_arch"/>
    <property type="match status" value="1"/>
</dbReference>
<dbReference type="NCBIfam" id="NF003220">
    <property type="entry name" value="PRK04192.1"/>
    <property type="match status" value="1"/>
</dbReference>
<dbReference type="PANTHER" id="PTHR43607:SF1">
    <property type="entry name" value="H(+)-TRANSPORTING TWO-SECTOR ATPASE"/>
    <property type="match status" value="1"/>
</dbReference>
<dbReference type="PANTHER" id="PTHR43607">
    <property type="entry name" value="V-TYPE PROTON ATPASE CATALYTIC SUBUNIT A"/>
    <property type="match status" value="1"/>
</dbReference>
<dbReference type="Pfam" id="PF00006">
    <property type="entry name" value="ATP-synt_ab"/>
    <property type="match status" value="1"/>
</dbReference>
<dbReference type="Pfam" id="PF02874">
    <property type="entry name" value="ATP-synt_ab_N"/>
    <property type="match status" value="1"/>
</dbReference>
<dbReference type="Pfam" id="PF16886">
    <property type="entry name" value="ATP-synt_ab_Xtn"/>
    <property type="match status" value="1"/>
</dbReference>
<dbReference type="Pfam" id="PF22919">
    <property type="entry name" value="ATP-synt_VA_C"/>
    <property type="match status" value="1"/>
</dbReference>
<dbReference type="SMART" id="SM00382">
    <property type="entry name" value="AAA"/>
    <property type="match status" value="1"/>
</dbReference>
<dbReference type="SUPFAM" id="SSF47917">
    <property type="entry name" value="C-terminal domain of alpha and beta subunits of F1 ATP synthase"/>
    <property type="match status" value="1"/>
</dbReference>
<dbReference type="SUPFAM" id="SSF50615">
    <property type="entry name" value="N-terminal domain of alpha and beta subunits of F1 ATP synthase"/>
    <property type="match status" value="1"/>
</dbReference>
<dbReference type="SUPFAM" id="SSF52540">
    <property type="entry name" value="P-loop containing nucleoside triphosphate hydrolases"/>
    <property type="match status" value="1"/>
</dbReference>
<dbReference type="PROSITE" id="PS00152">
    <property type="entry name" value="ATPASE_ALPHA_BETA"/>
    <property type="match status" value="1"/>
</dbReference>
<reference key="1">
    <citation type="journal article" date="2016" name="Stand. Genomic Sci.">
        <title>Complete genome sequence of Methanospirillum hungatei type strain JF1.</title>
        <authorList>
            <person name="Gunsalus R.P."/>
            <person name="Cook L.E."/>
            <person name="Crable B."/>
            <person name="Rohlin L."/>
            <person name="McDonald E."/>
            <person name="Mouttaki H."/>
            <person name="Sieber J.R."/>
            <person name="Poweleit N."/>
            <person name="Zhou H."/>
            <person name="Lapidus A.L."/>
            <person name="Daligault H.E."/>
            <person name="Land M."/>
            <person name="Gilna P."/>
            <person name="Ivanova N."/>
            <person name="Kyrpides N."/>
            <person name="Culley D.E."/>
            <person name="McInerney M.J."/>
        </authorList>
    </citation>
    <scope>NUCLEOTIDE SEQUENCE [LARGE SCALE GENOMIC DNA]</scope>
    <source>
        <strain>ATCC 27890 / DSM 864 / NBRC 100397 / JF-1</strain>
    </source>
</reference>
<keyword id="KW-0066">ATP synthesis</keyword>
<keyword id="KW-0067">ATP-binding</keyword>
<keyword id="KW-1003">Cell membrane</keyword>
<keyword id="KW-0375">Hydrogen ion transport</keyword>
<keyword id="KW-0406">Ion transport</keyword>
<keyword id="KW-0472">Membrane</keyword>
<keyword id="KW-0547">Nucleotide-binding</keyword>
<keyword id="KW-1185">Reference proteome</keyword>
<keyword id="KW-1278">Translocase</keyword>
<keyword id="KW-0813">Transport</keyword>
<sequence length="582" mass="64780">MEVKRTKGVLKRIAGPVVTAVNLDAHMYDVVKVGDEQLMGEVIKIKGEDIIIQVYEDTSGIKPGEPVENTGLSLSVELGPGLLTSIYDGIQRPLEVLVEKMGNFIERGVTAPGLSHDKKWEFKPIKKAGDMVTPGTIIGEVQETNIVHKIMVPPYCDAGKIKDIKSGSFTIDEIICTLDNGAEIAMMHKWPVRMPRPVTEKLNPDIPLITGQRILDGLFPVAKGGTAAIPGPFGSGKTVTQQALAKWSDAEIVVYIGCGERGNEMTEVLTEFPELEDPKTGRPLMERTVLIANTSNMPVAAREASVYTGITIAEYFRDMGYDVSLMADSTSRWAEAMREISSRLEEMPGEEGYPAYLAARLSEFYERAGRVNTLNKDFGSVTVIGAVSPPGGDFSEPVTQNTLRIVKCFWALDAKLSQRRHFPAINWLNSYSLYLDTLSQYYDENVSPEWNPLRTWAMEVLQKEAELQEIVQLVGSDALPDEEQVTIEVARMLREIFLQQNAFDPVDTYCDMTKQFDILKAIRFYSDQAYAALKAGVITSQITGLKAKNDLPQIKYVKEYKPEIERIVKTMESEFTKLREAA</sequence>
<protein>
    <recommendedName>
        <fullName evidence="1">A-type ATP synthase subunit A 1</fullName>
        <ecNumber evidence="1">7.1.2.2</ecNumber>
    </recommendedName>
</protein>
<feature type="chain" id="PRO_0000322482" description="A-type ATP synthase subunit A 1">
    <location>
        <begin position="1"/>
        <end position="582"/>
    </location>
</feature>
<feature type="binding site" evidence="1">
    <location>
        <begin position="231"/>
        <end position="238"/>
    </location>
    <ligand>
        <name>ATP</name>
        <dbReference type="ChEBI" id="CHEBI:30616"/>
    </ligand>
</feature>
<evidence type="ECO:0000255" key="1">
    <source>
        <dbReference type="HAMAP-Rule" id="MF_00309"/>
    </source>
</evidence>